<sequence length="105" mass="10260">MASEPNLRYPTEETGDRGPQGPPGPPGPQGPPGPQGPPGPQGPPGPQGPPGPQGPPGPQGPPGPPGPPGPSGLPGLFVTNLLLGIIILLLLIIVAILLVSKLVVN</sequence>
<evidence type="ECO:0000255" key="1"/>
<evidence type="ECO:0000256" key="2">
    <source>
        <dbReference type="SAM" id="MobiDB-lite"/>
    </source>
</evidence>
<evidence type="ECO:0000305" key="3"/>
<name>STP_SHV24</name>
<dbReference type="EMBL" id="M31964">
    <property type="protein sequence ID" value="AAA46152.1"/>
    <property type="molecule type" value="Genomic_DNA"/>
</dbReference>
<dbReference type="PIR" id="A36770">
    <property type="entry name" value="CGBEHS"/>
</dbReference>
<dbReference type="SMR" id="P25050"/>
<dbReference type="GO" id="GO:0005615">
    <property type="term" value="C:extracellular space"/>
    <property type="evidence" value="ECO:0007669"/>
    <property type="project" value="TreeGrafter"/>
</dbReference>
<dbReference type="GO" id="GO:0033644">
    <property type="term" value="C:host cell membrane"/>
    <property type="evidence" value="ECO:0007669"/>
    <property type="project" value="UniProtKB-SubCell"/>
</dbReference>
<dbReference type="GO" id="GO:0016020">
    <property type="term" value="C:membrane"/>
    <property type="evidence" value="ECO:0007669"/>
    <property type="project" value="UniProtKB-KW"/>
</dbReference>
<dbReference type="GO" id="GO:0030020">
    <property type="term" value="F:extracellular matrix structural constituent conferring tensile strength"/>
    <property type="evidence" value="ECO:0007669"/>
    <property type="project" value="TreeGrafter"/>
</dbReference>
<dbReference type="GO" id="GO:0030198">
    <property type="term" value="P:extracellular matrix organization"/>
    <property type="evidence" value="ECO:0007669"/>
    <property type="project" value="TreeGrafter"/>
</dbReference>
<dbReference type="InterPro" id="IPR008160">
    <property type="entry name" value="Collagen"/>
</dbReference>
<dbReference type="InterPro" id="IPR050149">
    <property type="entry name" value="Collagen_superfamily"/>
</dbReference>
<dbReference type="InterPro" id="IPR017095">
    <property type="entry name" value="StpC"/>
</dbReference>
<dbReference type="PANTHER" id="PTHR24023:SF1112">
    <property type="entry name" value="COL_CUTICLE_N DOMAIN-CONTAINING PROTEIN-RELATED"/>
    <property type="match status" value="1"/>
</dbReference>
<dbReference type="PANTHER" id="PTHR24023">
    <property type="entry name" value="COLLAGEN ALPHA"/>
    <property type="match status" value="1"/>
</dbReference>
<dbReference type="Pfam" id="PF01391">
    <property type="entry name" value="Collagen"/>
    <property type="match status" value="1"/>
</dbReference>
<dbReference type="PIRSF" id="PIRSF037035">
    <property type="entry name" value="Transforming_StpC"/>
    <property type="match status" value="1"/>
</dbReference>
<feature type="chain" id="PRO_0000116199" description="Saimiri transformation-associated protein">
    <location>
        <begin position="1"/>
        <end position="105"/>
    </location>
</feature>
<feature type="topological domain" description="Cytoplasmic" evidence="1">
    <location>
        <begin position="1"/>
        <end position="75"/>
    </location>
</feature>
<feature type="transmembrane region" description="Helical" evidence="1">
    <location>
        <begin position="76"/>
        <end position="96"/>
    </location>
</feature>
<feature type="topological domain" description="Extracellular" evidence="1">
    <location>
        <begin position="97"/>
        <end position="105"/>
    </location>
</feature>
<feature type="domain" description="Collagen-like">
    <location>
        <begin position="15"/>
        <end position="74"/>
    </location>
</feature>
<feature type="region of interest" description="Disordered" evidence="2">
    <location>
        <begin position="1"/>
        <end position="75"/>
    </location>
</feature>
<feature type="compositionally biased region" description="Pro residues" evidence="2">
    <location>
        <begin position="20"/>
        <end position="71"/>
    </location>
</feature>
<protein>
    <recommendedName>
        <fullName>Saimiri transformation-associated protein</fullName>
    </recommendedName>
    <alternativeName>
        <fullName>Collagen-like protein</fullName>
    </alternativeName>
    <alternativeName>
        <fullName>stpC</fullName>
    </alternativeName>
</protein>
<proteinExistence type="predicted"/>
<keyword id="KW-0176">Collagen</keyword>
<keyword id="KW-1043">Host membrane</keyword>
<keyword id="KW-0945">Host-virus interaction</keyword>
<keyword id="KW-0472">Membrane</keyword>
<keyword id="KW-0553">Oncogene</keyword>
<keyword id="KW-0677">Repeat</keyword>
<keyword id="KW-0812">Transmembrane</keyword>
<keyword id="KW-1133">Transmembrane helix</keyword>
<organism>
    <name type="scientific">Saimiriine herpesvirus 2 (strain 484-77)</name>
    <name type="common">SaHV-2</name>
    <name type="synonym">Herpesvirus saimiri</name>
    <dbReference type="NCBI Taxonomy" id="10382"/>
    <lineage>
        <taxon>Viruses</taxon>
        <taxon>Duplodnaviria</taxon>
        <taxon>Heunggongvirae</taxon>
        <taxon>Peploviricota</taxon>
        <taxon>Herviviricetes</taxon>
        <taxon>Herpesvirales</taxon>
        <taxon>Orthoherpesviridae</taxon>
        <taxon>Gammaherpesvirinae</taxon>
        <taxon>Rhadinovirus</taxon>
        <taxon>Rhadinovirus saimiriinegamma2</taxon>
        <taxon>Saimiriine herpesvirus 2</taxon>
    </lineage>
</organism>
<reference key="1">
    <citation type="journal article" date="1990" name="J. Virol.">
        <title>Expression of collagenlike sequences by a tumor virus, herpesvirus saimiri.</title>
        <authorList>
            <person name="Geck P."/>
            <person name="Whitaker S.A."/>
            <person name="Medveczky M.M."/>
            <person name="Medveczky P.G."/>
        </authorList>
    </citation>
    <scope>NUCLEOTIDE SEQUENCE [GENOMIC DNA]</scope>
</reference>
<reference key="2">
    <citation type="journal article" date="1991" name="J. Virol.">
        <authorList>
            <person name="Geck P."/>
            <person name="Whitaker S.A."/>
            <person name="Medveczky M.M."/>
            <person name="Medveczky P.G."/>
        </authorList>
    </citation>
    <scope>ERRATUM OF PUBMED:2161952</scope>
    <scope>SEQUENCE REVISION</scope>
</reference>
<accession>P25050</accession>
<organismHost>
    <name type="scientific">Saimiri sciureus</name>
    <name type="common">Common squirrel monkey</name>
    <dbReference type="NCBI Taxonomy" id="9521"/>
</organismHost>
<comment type="function">
    <text>Acts synergistically with Tip to stimulate NF-kappa-B activity and interleukin-2 gene expression by binding to host TRAF proteins. Activation of NF-kappa-B protects lymphocytes from apoptosis, thereby facilitating viral induced cell transformation.</text>
</comment>
<comment type="subunit">
    <text>Binds to host RAS and TRAF2.</text>
</comment>
<comment type="subcellular location">
    <subcellularLocation>
        <location evidence="3">Host membrane</location>
        <topology evidence="3">Single-pass membrane protein</topology>
    </subcellularLocation>
</comment>
<comment type="miscellaneous">
    <text>Saimiriine herpesvirus 2 transforms T-lymphocytes, including human, to continuous growth in vitro. Two viral proteins, Tip and StpC, are essential for this function. The virus induced transforming activation is used as an important tool of T-cell biology, including HIV replication.</text>
</comment>